<proteinExistence type="inferred from homology"/>
<keyword id="KW-0067">ATP-binding</keyword>
<keyword id="KW-0143">Chaperone</keyword>
<keyword id="KW-0963">Cytoplasm</keyword>
<keyword id="KW-0547">Nucleotide-binding</keyword>
<keyword id="KW-1185">Reference proteome</keyword>
<keyword id="KW-0346">Stress response</keyword>
<accession>B9MFS2</accession>
<organism>
    <name type="scientific">Acidovorax ebreus (strain TPSY)</name>
    <name type="common">Diaphorobacter sp. (strain TPSY)</name>
    <dbReference type="NCBI Taxonomy" id="535289"/>
    <lineage>
        <taxon>Bacteria</taxon>
        <taxon>Pseudomonadati</taxon>
        <taxon>Pseudomonadota</taxon>
        <taxon>Betaproteobacteria</taxon>
        <taxon>Burkholderiales</taxon>
        <taxon>Comamonadaceae</taxon>
        <taxon>Diaphorobacter</taxon>
    </lineage>
</organism>
<name>HSLU_ACIET</name>
<protein>
    <recommendedName>
        <fullName evidence="1">ATP-dependent protease ATPase subunit HslU</fullName>
    </recommendedName>
    <alternativeName>
        <fullName evidence="1">Unfoldase HslU</fullName>
    </alternativeName>
</protein>
<reference key="1">
    <citation type="submission" date="2009-01" db="EMBL/GenBank/DDBJ databases">
        <title>Complete sequence of Diaphorobacter sp. TPSY.</title>
        <authorList>
            <consortium name="US DOE Joint Genome Institute"/>
            <person name="Lucas S."/>
            <person name="Copeland A."/>
            <person name="Lapidus A."/>
            <person name="Glavina del Rio T."/>
            <person name="Tice H."/>
            <person name="Bruce D."/>
            <person name="Goodwin L."/>
            <person name="Pitluck S."/>
            <person name="Chertkov O."/>
            <person name="Brettin T."/>
            <person name="Detter J.C."/>
            <person name="Han C."/>
            <person name="Larimer F."/>
            <person name="Land M."/>
            <person name="Hauser L."/>
            <person name="Kyrpides N."/>
            <person name="Mikhailova N."/>
            <person name="Coates J.D."/>
        </authorList>
    </citation>
    <scope>NUCLEOTIDE SEQUENCE [LARGE SCALE GENOMIC DNA]</scope>
    <source>
        <strain>TPSY</strain>
    </source>
</reference>
<gene>
    <name evidence="1" type="primary">hslU</name>
    <name type="ordered locus">Dtpsy_2990</name>
</gene>
<comment type="function">
    <text evidence="1">ATPase subunit of a proteasome-like degradation complex; this subunit has chaperone activity. The binding of ATP and its subsequent hydrolysis by HslU are essential for unfolding of protein substrates subsequently hydrolyzed by HslV. HslU recognizes the N-terminal part of its protein substrates and unfolds these before they are guided to HslV for hydrolysis.</text>
</comment>
<comment type="subunit">
    <text evidence="1">A double ring-shaped homohexamer of HslV is capped on each side by a ring-shaped HslU homohexamer. The assembly of the HslU/HslV complex is dependent on binding of ATP.</text>
</comment>
<comment type="subcellular location">
    <subcellularLocation>
        <location evidence="1">Cytoplasm</location>
    </subcellularLocation>
</comment>
<comment type="similarity">
    <text evidence="1">Belongs to the ClpX chaperone family. HslU subfamily.</text>
</comment>
<feature type="chain" id="PRO_1000125436" description="ATP-dependent protease ATPase subunit HslU">
    <location>
        <begin position="1"/>
        <end position="446"/>
    </location>
</feature>
<feature type="binding site" evidence="1">
    <location>
        <position position="18"/>
    </location>
    <ligand>
        <name>ATP</name>
        <dbReference type="ChEBI" id="CHEBI:30616"/>
    </ligand>
</feature>
<feature type="binding site" evidence="1">
    <location>
        <begin position="60"/>
        <end position="65"/>
    </location>
    <ligand>
        <name>ATP</name>
        <dbReference type="ChEBI" id="CHEBI:30616"/>
    </ligand>
</feature>
<feature type="binding site" evidence="1">
    <location>
        <position position="259"/>
    </location>
    <ligand>
        <name>ATP</name>
        <dbReference type="ChEBI" id="CHEBI:30616"/>
    </ligand>
</feature>
<feature type="binding site" evidence="1">
    <location>
        <position position="324"/>
    </location>
    <ligand>
        <name>ATP</name>
        <dbReference type="ChEBI" id="CHEBI:30616"/>
    </ligand>
</feature>
<feature type="binding site" evidence="1">
    <location>
        <position position="396"/>
    </location>
    <ligand>
        <name>ATP</name>
        <dbReference type="ChEBI" id="CHEBI:30616"/>
    </ligand>
</feature>
<evidence type="ECO:0000255" key="1">
    <source>
        <dbReference type="HAMAP-Rule" id="MF_00249"/>
    </source>
</evidence>
<sequence length="446" mass="49598">MSSMTPQEIVSELDRHIVGQNGAKRAVAIALRNRWRRQQVDASLRHEITPKNILMIGPTGVGKTEIARRLARLADAPFIKVEATKFTEVGYVGKDVDSIVRDLVEVAVKQTREADMKKVRVRAEDAAEDRILDVLIPPARGASVDTARTGDPAGDSTARQVFRKKLREGQLDDKEIEIDLADARPQFEIMSPAGMEEMTEQLRGMFSQMGQERRRARKLKIAEAMKLLVEEEAAKLVNEEEVKTRALANAEQNGIVFIDEIDKVASRQEAGGADVSRQGVQRDLLPLVEGTTVSTKYGMVKTDHILFIASGAFHLAKPSDLIPELQGRFPIRVELTSLSVQDFEAILTQTHASLVKQYQALLETEGVTLDFTPEGITRLAHIAFEVNERTENIGARRLSTVMERLLDEVSYDATRLSGQTVVVDAGYVNARLQSLSQDEDLSRYIL</sequence>
<dbReference type="EMBL" id="CP001392">
    <property type="protein sequence ID" value="ACM34423.1"/>
    <property type="molecule type" value="Genomic_DNA"/>
</dbReference>
<dbReference type="RefSeq" id="WP_015914270.1">
    <property type="nucleotide sequence ID" value="NC_011992.1"/>
</dbReference>
<dbReference type="SMR" id="B9MFS2"/>
<dbReference type="KEGG" id="dia:Dtpsy_2990"/>
<dbReference type="eggNOG" id="COG1220">
    <property type="taxonomic scope" value="Bacteria"/>
</dbReference>
<dbReference type="HOGENOM" id="CLU_033123_0_0_4"/>
<dbReference type="Proteomes" id="UP000000450">
    <property type="component" value="Chromosome"/>
</dbReference>
<dbReference type="GO" id="GO:0009376">
    <property type="term" value="C:HslUV protease complex"/>
    <property type="evidence" value="ECO:0007669"/>
    <property type="project" value="UniProtKB-UniRule"/>
</dbReference>
<dbReference type="GO" id="GO:0005524">
    <property type="term" value="F:ATP binding"/>
    <property type="evidence" value="ECO:0007669"/>
    <property type="project" value="UniProtKB-UniRule"/>
</dbReference>
<dbReference type="GO" id="GO:0016887">
    <property type="term" value="F:ATP hydrolysis activity"/>
    <property type="evidence" value="ECO:0007669"/>
    <property type="project" value="InterPro"/>
</dbReference>
<dbReference type="GO" id="GO:0008233">
    <property type="term" value="F:peptidase activity"/>
    <property type="evidence" value="ECO:0007669"/>
    <property type="project" value="InterPro"/>
</dbReference>
<dbReference type="GO" id="GO:0036402">
    <property type="term" value="F:proteasome-activating activity"/>
    <property type="evidence" value="ECO:0007669"/>
    <property type="project" value="UniProtKB-UniRule"/>
</dbReference>
<dbReference type="GO" id="GO:0043335">
    <property type="term" value="P:protein unfolding"/>
    <property type="evidence" value="ECO:0007669"/>
    <property type="project" value="UniProtKB-UniRule"/>
</dbReference>
<dbReference type="GO" id="GO:0051603">
    <property type="term" value="P:proteolysis involved in protein catabolic process"/>
    <property type="evidence" value="ECO:0007669"/>
    <property type="project" value="TreeGrafter"/>
</dbReference>
<dbReference type="CDD" id="cd19498">
    <property type="entry name" value="RecA-like_HslU"/>
    <property type="match status" value="1"/>
</dbReference>
<dbReference type="FunFam" id="1.10.8.10:FF:000028">
    <property type="entry name" value="ATP-dependent protease ATPase subunit HslU"/>
    <property type="match status" value="1"/>
</dbReference>
<dbReference type="FunFam" id="3.40.50.300:FF:000213">
    <property type="entry name" value="ATP-dependent protease ATPase subunit HslU"/>
    <property type="match status" value="1"/>
</dbReference>
<dbReference type="FunFam" id="3.40.50.300:FF:000220">
    <property type="entry name" value="ATP-dependent protease ATPase subunit HslU"/>
    <property type="match status" value="1"/>
</dbReference>
<dbReference type="Gene3D" id="1.10.8.60">
    <property type="match status" value="1"/>
</dbReference>
<dbReference type="Gene3D" id="1.10.8.10">
    <property type="entry name" value="DNA helicase RuvA subunit, C-terminal domain"/>
    <property type="match status" value="1"/>
</dbReference>
<dbReference type="Gene3D" id="3.40.50.300">
    <property type="entry name" value="P-loop containing nucleotide triphosphate hydrolases"/>
    <property type="match status" value="2"/>
</dbReference>
<dbReference type="HAMAP" id="MF_00249">
    <property type="entry name" value="HslU"/>
    <property type="match status" value="1"/>
</dbReference>
<dbReference type="InterPro" id="IPR003593">
    <property type="entry name" value="AAA+_ATPase"/>
</dbReference>
<dbReference type="InterPro" id="IPR050052">
    <property type="entry name" value="ATP-dep_Clp_protease_ClpX"/>
</dbReference>
<dbReference type="InterPro" id="IPR003959">
    <property type="entry name" value="ATPase_AAA_core"/>
</dbReference>
<dbReference type="InterPro" id="IPR019489">
    <property type="entry name" value="Clp_ATPase_C"/>
</dbReference>
<dbReference type="InterPro" id="IPR004491">
    <property type="entry name" value="HslU"/>
</dbReference>
<dbReference type="InterPro" id="IPR027417">
    <property type="entry name" value="P-loop_NTPase"/>
</dbReference>
<dbReference type="NCBIfam" id="TIGR00390">
    <property type="entry name" value="hslU"/>
    <property type="match status" value="1"/>
</dbReference>
<dbReference type="NCBIfam" id="NF003544">
    <property type="entry name" value="PRK05201.1"/>
    <property type="match status" value="1"/>
</dbReference>
<dbReference type="PANTHER" id="PTHR48102">
    <property type="entry name" value="ATP-DEPENDENT CLP PROTEASE ATP-BINDING SUBUNIT CLPX-LIKE, MITOCHONDRIAL-RELATED"/>
    <property type="match status" value="1"/>
</dbReference>
<dbReference type="PANTHER" id="PTHR48102:SF3">
    <property type="entry name" value="ATP-DEPENDENT PROTEASE ATPASE SUBUNIT HSLU"/>
    <property type="match status" value="1"/>
</dbReference>
<dbReference type="Pfam" id="PF00004">
    <property type="entry name" value="AAA"/>
    <property type="match status" value="1"/>
</dbReference>
<dbReference type="Pfam" id="PF07724">
    <property type="entry name" value="AAA_2"/>
    <property type="match status" value="1"/>
</dbReference>
<dbReference type="SMART" id="SM00382">
    <property type="entry name" value="AAA"/>
    <property type="match status" value="1"/>
</dbReference>
<dbReference type="SMART" id="SM01086">
    <property type="entry name" value="ClpB_D2-small"/>
    <property type="match status" value="1"/>
</dbReference>
<dbReference type="SUPFAM" id="SSF52540">
    <property type="entry name" value="P-loop containing nucleoside triphosphate hydrolases"/>
    <property type="match status" value="1"/>
</dbReference>